<name>EFG1_CUPMC</name>
<reference key="1">
    <citation type="journal article" date="2010" name="PLoS ONE">
        <title>The complete genome sequence of Cupriavidus metallidurans strain CH34, a master survivalist in harsh and anthropogenic environments.</title>
        <authorList>
            <person name="Janssen P.J."/>
            <person name="Van Houdt R."/>
            <person name="Moors H."/>
            <person name="Monsieurs P."/>
            <person name="Morin N."/>
            <person name="Michaux A."/>
            <person name="Benotmane M.A."/>
            <person name="Leys N."/>
            <person name="Vallaeys T."/>
            <person name="Lapidus A."/>
            <person name="Monchy S."/>
            <person name="Medigue C."/>
            <person name="Taghavi S."/>
            <person name="McCorkle S."/>
            <person name="Dunn J."/>
            <person name="van der Lelie D."/>
            <person name="Mergeay M."/>
        </authorList>
    </citation>
    <scope>NUCLEOTIDE SEQUENCE [LARGE SCALE GENOMIC DNA]</scope>
    <source>
        <strain>ATCC 43123 / DSM 2839 / NBRC 102507 / CH34</strain>
    </source>
</reference>
<feature type="chain" id="PRO_0000263487" description="Elongation factor G 1">
    <location>
        <begin position="1"/>
        <end position="703"/>
    </location>
</feature>
<feature type="domain" description="tr-type G">
    <location>
        <begin position="8"/>
        <end position="290"/>
    </location>
</feature>
<feature type="binding site" evidence="1">
    <location>
        <begin position="17"/>
        <end position="24"/>
    </location>
    <ligand>
        <name>GTP</name>
        <dbReference type="ChEBI" id="CHEBI:37565"/>
    </ligand>
</feature>
<feature type="binding site" evidence="1">
    <location>
        <begin position="88"/>
        <end position="92"/>
    </location>
    <ligand>
        <name>GTP</name>
        <dbReference type="ChEBI" id="CHEBI:37565"/>
    </ligand>
</feature>
<feature type="binding site" evidence="1">
    <location>
        <begin position="142"/>
        <end position="145"/>
    </location>
    <ligand>
        <name>GTP</name>
        <dbReference type="ChEBI" id="CHEBI:37565"/>
    </ligand>
</feature>
<dbReference type="EMBL" id="CP000352">
    <property type="protein sequence ID" value="ABF10197.1"/>
    <property type="molecule type" value="Genomic_DNA"/>
</dbReference>
<dbReference type="SMR" id="Q1LI29"/>
<dbReference type="STRING" id="266264.Rmet_3325"/>
<dbReference type="KEGG" id="rme:Rmet_3325"/>
<dbReference type="eggNOG" id="COG0480">
    <property type="taxonomic scope" value="Bacteria"/>
</dbReference>
<dbReference type="HOGENOM" id="CLU_002794_4_1_4"/>
<dbReference type="Proteomes" id="UP000002429">
    <property type="component" value="Chromosome"/>
</dbReference>
<dbReference type="GO" id="GO:0005737">
    <property type="term" value="C:cytoplasm"/>
    <property type="evidence" value="ECO:0007669"/>
    <property type="project" value="UniProtKB-SubCell"/>
</dbReference>
<dbReference type="GO" id="GO:0005525">
    <property type="term" value="F:GTP binding"/>
    <property type="evidence" value="ECO:0007669"/>
    <property type="project" value="UniProtKB-UniRule"/>
</dbReference>
<dbReference type="GO" id="GO:0003924">
    <property type="term" value="F:GTPase activity"/>
    <property type="evidence" value="ECO:0007669"/>
    <property type="project" value="InterPro"/>
</dbReference>
<dbReference type="GO" id="GO:0097216">
    <property type="term" value="F:guanosine tetraphosphate binding"/>
    <property type="evidence" value="ECO:0007669"/>
    <property type="project" value="UniProtKB-ARBA"/>
</dbReference>
<dbReference type="GO" id="GO:0003746">
    <property type="term" value="F:translation elongation factor activity"/>
    <property type="evidence" value="ECO:0007669"/>
    <property type="project" value="UniProtKB-UniRule"/>
</dbReference>
<dbReference type="GO" id="GO:0032790">
    <property type="term" value="P:ribosome disassembly"/>
    <property type="evidence" value="ECO:0007669"/>
    <property type="project" value="TreeGrafter"/>
</dbReference>
<dbReference type="CDD" id="cd01886">
    <property type="entry name" value="EF-G"/>
    <property type="match status" value="1"/>
</dbReference>
<dbReference type="CDD" id="cd16262">
    <property type="entry name" value="EFG_III"/>
    <property type="match status" value="1"/>
</dbReference>
<dbReference type="CDD" id="cd01434">
    <property type="entry name" value="EFG_mtEFG1_IV"/>
    <property type="match status" value="1"/>
</dbReference>
<dbReference type="CDD" id="cd03713">
    <property type="entry name" value="EFG_mtEFG_C"/>
    <property type="match status" value="1"/>
</dbReference>
<dbReference type="CDD" id="cd04088">
    <property type="entry name" value="EFG_mtEFG_II"/>
    <property type="match status" value="1"/>
</dbReference>
<dbReference type="FunFam" id="2.40.30.10:FF:000006">
    <property type="entry name" value="Elongation factor G"/>
    <property type="match status" value="1"/>
</dbReference>
<dbReference type="FunFam" id="3.30.230.10:FF:000003">
    <property type="entry name" value="Elongation factor G"/>
    <property type="match status" value="1"/>
</dbReference>
<dbReference type="FunFam" id="3.30.70.240:FF:000001">
    <property type="entry name" value="Elongation factor G"/>
    <property type="match status" value="1"/>
</dbReference>
<dbReference type="FunFam" id="3.30.70.870:FF:000001">
    <property type="entry name" value="Elongation factor G"/>
    <property type="match status" value="1"/>
</dbReference>
<dbReference type="FunFam" id="3.40.50.300:FF:000029">
    <property type="entry name" value="Elongation factor G"/>
    <property type="match status" value="1"/>
</dbReference>
<dbReference type="Gene3D" id="3.30.230.10">
    <property type="match status" value="1"/>
</dbReference>
<dbReference type="Gene3D" id="3.30.70.240">
    <property type="match status" value="1"/>
</dbReference>
<dbReference type="Gene3D" id="3.30.70.870">
    <property type="entry name" value="Elongation Factor G (Translational Gtpase), domain 3"/>
    <property type="match status" value="1"/>
</dbReference>
<dbReference type="Gene3D" id="3.40.50.300">
    <property type="entry name" value="P-loop containing nucleotide triphosphate hydrolases"/>
    <property type="match status" value="1"/>
</dbReference>
<dbReference type="Gene3D" id="2.40.30.10">
    <property type="entry name" value="Translation factors"/>
    <property type="match status" value="1"/>
</dbReference>
<dbReference type="HAMAP" id="MF_00054_B">
    <property type="entry name" value="EF_G_EF_2_B"/>
    <property type="match status" value="1"/>
</dbReference>
<dbReference type="InterPro" id="IPR041095">
    <property type="entry name" value="EFG_II"/>
</dbReference>
<dbReference type="InterPro" id="IPR009022">
    <property type="entry name" value="EFG_III"/>
</dbReference>
<dbReference type="InterPro" id="IPR035647">
    <property type="entry name" value="EFG_III/V"/>
</dbReference>
<dbReference type="InterPro" id="IPR047872">
    <property type="entry name" value="EFG_IV"/>
</dbReference>
<dbReference type="InterPro" id="IPR035649">
    <property type="entry name" value="EFG_V"/>
</dbReference>
<dbReference type="InterPro" id="IPR000640">
    <property type="entry name" value="EFG_V-like"/>
</dbReference>
<dbReference type="InterPro" id="IPR004161">
    <property type="entry name" value="EFTu-like_2"/>
</dbReference>
<dbReference type="InterPro" id="IPR031157">
    <property type="entry name" value="G_TR_CS"/>
</dbReference>
<dbReference type="InterPro" id="IPR027417">
    <property type="entry name" value="P-loop_NTPase"/>
</dbReference>
<dbReference type="InterPro" id="IPR020568">
    <property type="entry name" value="Ribosomal_Su5_D2-typ_SF"/>
</dbReference>
<dbReference type="InterPro" id="IPR014721">
    <property type="entry name" value="Ribsml_uS5_D2-typ_fold_subgr"/>
</dbReference>
<dbReference type="InterPro" id="IPR005225">
    <property type="entry name" value="Small_GTP-bd"/>
</dbReference>
<dbReference type="InterPro" id="IPR000795">
    <property type="entry name" value="T_Tr_GTP-bd_dom"/>
</dbReference>
<dbReference type="InterPro" id="IPR009000">
    <property type="entry name" value="Transl_B-barrel_sf"/>
</dbReference>
<dbReference type="InterPro" id="IPR004540">
    <property type="entry name" value="Transl_elong_EFG/EF2"/>
</dbReference>
<dbReference type="InterPro" id="IPR005517">
    <property type="entry name" value="Transl_elong_EFG/EF2_IV"/>
</dbReference>
<dbReference type="NCBIfam" id="TIGR00484">
    <property type="entry name" value="EF-G"/>
    <property type="match status" value="1"/>
</dbReference>
<dbReference type="NCBIfam" id="NF009381">
    <property type="entry name" value="PRK12740.1-5"/>
    <property type="match status" value="1"/>
</dbReference>
<dbReference type="NCBIfam" id="TIGR00231">
    <property type="entry name" value="small_GTP"/>
    <property type="match status" value="1"/>
</dbReference>
<dbReference type="PANTHER" id="PTHR43261:SF1">
    <property type="entry name" value="RIBOSOME-RELEASING FACTOR 2, MITOCHONDRIAL"/>
    <property type="match status" value="1"/>
</dbReference>
<dbReference type="PANTHER" id="PTHR43261">
    <property type="entry name" value="TRANSLATION ELONGATION FACTOR G-RELATED"/>
    <property type="match status" value="1"/>
</dbReference>
<dbReference type="Pfam" id="PF00679">
    <property type="entry name" value="EFG_C"/>
    <property type="match status" value="1"/>
</dbReference>
<dbReference type="Pfam" id="PF14492">
    <property type="entry name" value="EFG_III"/>
    <property type="match status" value="1"/>
</dbReference>
<dbReference type="Pfam" id="PF03764">
    <property type="entry name" value="EFG_IV"/>
    <property type="match status" value="1"/>
</dbReference>
<dbReference type="Pfam" id="PF00009">
    <property type="entry name" value="GTP_EFTU"/>
    <property type="match status" value="1"/>
</dbReference>
<dbReference type="Pfam" id="PF03144">
    <property type="entry name" value="GTP_EFTU_D2"/>
    <property type="match status" value="1"/>
</dbReference>
<dbReference type="PRINTS" id="PR00315">
    <property type="entry name" value="ELONGATNFCT"/>
</dbReference>
<dbReference type="SMART" id="SM00838">
    <property type="entry name" value="EFG_C"/>
    <property type="match status" value="1"/>
</dbReference>
<dbReference type="SMART" id="SM00889">
    <property type="entry name" value="EFG_IV"/>
    <property type="match status" value="1"/>
</dbReference>
<dbReference type="SUPFAM" id="SSF54980">
    <property type="entry name" value="EF-G C-terminal domain-like"/>
    <property type="match status" value="2"/>
</dbReference>
<dbReference type="SUPFAM" id="SSF52540">
    <property type="entry name" value="P-loop containing nucleoside triphosphate hydrolases"/>
    <property type="match status" value="1"/>
</dbReference>
<dbReference type="SUPFAM" id="SSF54211">
    <property type="entry name" value="Ribosomal protein S5 domain 2-like"/>
    <property type="match status" value="1"/>
</dbReference>
<dbReference type="SUPFAM" id="SSF50447">
    <property type="entry name" value="Translation proteins"/>
    <property type="match status" value="1"/>
</dbReference>
<dbReference type="PROSITE" id="PS00301">
    <property type="entry name" value="G_TR_1"/>
    <property type="match status" value="1"/>
</dbReference>
<dbReference type="PROSITE" id="PS51722">
    <property type="entry name" value="G_TR_2"/>
    <property type="match status" value="1"/>
</dbReference>
<protein>
    <recommendedName>
        <fullName evidence="1">Elongation factor G 1</fullName>
        <shortName evidence="1">EF-G 1</shortName>
    </recommendedName>
</protein>
<evidence type="ECO:0000255" key="1">
    <source>
        <dbReference type="HAMAP-Rule" id="MF_00054"/>
    </source>
</evidence>
<accession>Q1LI29</accession>
<keyword id="KW-0963">Cytoplasm</keyword>
<keyword id="KW-0251">Elongation factor</keyword>
<keyword id="KW-0342">GTP-binding</keyword>
<keyword id="KW-0547">Nucleotide-binding</keyword>
<keyword id="KW-0648">Protein biosynthesis</keyword>
<keyword id="KW-1185">Reference proteome</keyword>
<sequence length="703" mass="77521">MARKTPIERYRNIGISAHIDAGKTTTTERILFYTGVNHKIGEVHDGAATMDWMEQEQERGITITSAATTAFWKGMGGNYPEHRFNIIDTPGHVDFTIEVERSMRVLDGACMVYCAVGGVQPQSETVWRQANKYGVPRLAFVNKMDRTGANFFKVYDQLKTRLKANPVPVVVPIGAEDGFQGVVDLLEMKAIVWDEASQGVKFEYQDIPAELQATADEWREKMVESAAEASEELMEKYLGGEELTRAEIVKALRDRTIACEIQPMLCGTAFKNKGVQRMLDAVIDFLPSPVDIPPVKGVDESDDEKKLERKADDNEKFSALAFKIMTDPFVGQLIFFRVYSGKINSGDTVYNPVKQKKERLGRILQMHANQREEIKEVLAGDIAAAVGLKDATTGDTLCDPAAPIVLERMVFPEPVISQAVEPKTKADQEKMGIALNRLAAEDPSFRVRTDEESGQTIISGMGELHLEILVDRMKREFGVEANIGAPQVAYRETIRKKAEDVEGKFVKQSGGRGQYGHAVITLEPQEPGKGFEFIDAIKGGVIPREYIPAVEKGIVDTLPAGILAGFPVVDVKVTLTFGSYHDVDSNENAFRMAGSMAFKEAMRKASPVLLEPMMAVEVETPEDYTGTVMGDLSSRRGIVQGMDDMVGGGKIIKAEVPLSEMFGYSTALRSATQGRATYTMEFKHYAEAPKNIAEAVMTAKGKQ</sequence>
<comment type="function">
    <text evidence="1">Catalyzes the GTP-dependent ribosomal translocation step during translation elongation. During this step, the ribosome changes from the pre-translocational (PRE) to the post-translocational (POST) state as the newly formed A-site-bound peptidyl-tRNA and P-site-bound deacylated tRNA move to the P and E sites, respectively. Catalyzes the coordinated movement of the two tRNA molecules, the mRNA and conformational changes in the ribosome.</text>
</comment>
<comment type="subcellular location">
    <subcellularLocation>
        <location evidence="1">Cytoplasm</location>
    </subcellularLocation>
</comment>
<comment type="similarity">
    <text evidence="1">Belongs to the TRAFAC class translation factor GTPase superfamily. Classic translation factor GTPase family. EF-G/EF-2 subfamily.</text>
</comment>
<organism>
    <name type="scientific">Cupriavidus metallidurans (strain ATCC 43123 / DSM 2839 / NBRC 102507 / CH34)</name>
    <name type="common">Ralstonia metallidurans</name>
    <dbReference type="NCBI Taxonomy" id="266264"/>
    <lineage>
        <taxon>Bacteria</taxon>
        <taxon>Pseudomonadati</taxon>
        <taxon>Pseudomonadota</taxon>
        <taxon>Betaproteobacteria</taxon>
        <taxon>Burkholderiales</taxon>
        <taxon>Burkholderiaceae</taxon>
        <taxon>Cupriavidus</taxon>
    </lineage>
</organism>
<proteinExistence type="inferred from homology"/>
<gene>
    <name evidence="1" type="primary">fusA1</name>
    <name type="ordered locus">Rmet_3325</name>
</gene>